<comment type="function">
    <text evidence="2">Involved in transport.</text>
</comment>
<comment type="subcellular location">
    <subcellularLocation>
        <location evidence="2">Cell membrane</location>
        <topology evidence="2">Multi-pass membrane protein</topology>
    </subcellularLocation>
</comment>
<comment type="similarity">
    <text evidence="2">To B.subtilis YxaH and YrkO.</text>
</comment>
<organism>
    <name type="scientific">Escherichia coli (strain K12)</name>
    <dbReference type="NCBI Taxonomy" id="83333"/>
    <lineage>
        <taxon>Bacteria</taxon>
        <taxon>Pseudomonadati</taxon>
        <taxon>Pseudomonadota</taxon>
        <taxon>Gammaproteobacteria</taxon>
        <taxon>Enterobacterales</taxon>
        <taxon>Enterobacteriaceae</taxon>
        <taxon>Escherichia</taxon>
    </lineage>
</organism>
<protein>
    <recommendedName>
        <fullName>Uncharacterized protein YeiB</fullName>
    </recommendedName>
</protein>
<accession>P25747</accession>
<accession>Q2MAS7</accession>
<sequence>MERNVTLDFVRGVAILGILLLNISAFGLPKAAYLNPAWYGAITPRDAWTWAFLDLIGQVKFLTLFALLFGAGLQMLLPRGRRWIQSRLTLLVLLGFIHGLLFWDGDILLAYGLVGLICWRLVRDAPSVKSLFNTGVMLYLVGLGVLLLLGLISDSQTSRAWTPDASAILYEKYWKLHGGVEAISNRADGVGNSLLALGAQYGWQLAGMMLIGAALMRSGWLKGQFSLRHYRRTGFVLVAIGVTINLPAIALQWQLDWAYRWCAFLLQMPRELSAPFQAIGYASLFYGFWPQLSRFKLVLAIACVGRMALTNYLLQTLICTTLFYHLGLFMHFDRLELLAFVIPVWLANILFSVIWLRYFRQGPVEWLWRQLTLRAAGPAISKTSR</sequence>
<proteinExistence type="predicted"/>
<keyword id="KW-1003">Cell membrane</keyword>
<keyword id="KW-0472">Membrane</keyword>
<keyword id="KW-1185">Reference proteome</keyword>
<keyword id="KW-0812">Transmembrane</keyword>
<keyword id="KW-1133">Transmembrane helix</keyword>
<keyword id="KW-0813">Transport</keyword>
<reference key="1">
    <citation type="submission" date="1993-10" db="EMBL/GenBank/DDBJ databases">
        <title>Automated multiplex sequencing of the E.coli genome.</title>
        <authorList>
            <person name="Richterich P."/>
            <person name="Lakey N."/>
            <person name="Gryan G."/>
            <person name="Jaehn L."/>
            <person name="Mintz L."/>
            <person name="Robison K."/>
            <person name="Church G.M."/>
        </authorList>
    </citation>
    <scope>NUCLEOTIDE SEQUENCE [LARGE SCALE GENOMIC DNA]</scope>
    <source>
        <strain>K12 / BHB2600</strain>
    </source>
</reference>
<reference key="2">
    <citation type="journal article" date="1997" name="Science">
        <title>The complete genome sequence of Escherichia coli K-12.</title>
        <authorList>
            <person name="Blattner F.R."/>
            <person name="Plunkett G. III"/>
            <person name="Bloch C.A."/>
            <person name="Perna N.T."/>
            <person name="Burland V."/>
            <person name="Riley M."/>
            <person name="Collado-Vides J."/>
            <person name="Glasner J.D."/>
            <person name="Rode C.K."/>
            <person name="Mayhew G.F."/>
            <person name="Gregor J."/>
            <person name="Davis N.W."/>
            <person name="Kirkpatrick H.A."/>
            <person name="Goeden M.A."/>
            <person name="Rose D.J."/>
            <person name="Mau B."/>
            <person name="Shao Y."/>
        </authorList>
    </citation>
    <scope>NUCLEOTIDE SEQUENCE [LARGE SCALE GENOMIC DNA]</scope>
    <source>
        <strain>K12 / MG1655 / ATCC 47076</strain>
    </source>
</reference>
<reference key="3">
    <citation type="journal article" date="2006" name="Mol. Syst. Biol.">
        <title>Highly accurate genome sequences of Escherichia coli K-12 strains MG1655 and W3110.</title>
        <authorList>
            <person name="Hayashi K."/>
            <person name="Morooka N."/>
            <person name="Yamamoto Y."/>
            <person name="Fujita K."/>
            <person name="Isono K."/>
            <person name="Choi S."/>
            <person name="Ohtsubo E."/>
            <person name="Baba T."/>
            <person name="Wanner B.L."/>
            <person name="Mori H."/>
            <person name="Horiuchi T."/>
        </authorList>
    </citation>
    <scope>NUCLEOTIDE SEQUENCE [LARGE SCALE GENOMIC DNA]</scope>
    <source>
        <strain>K12 / W3110 / ATCC 27325 / DSM 5911</strain>
    </source>
</reference>
<reference key="4">
    <citation type="journal article" date="1992" name="J. Mol. Biol.">
        <title>Isorepressor of the gal regulon in Escherichia coli.</title>
        <authorList>
            <person name="Weickert M.J."/>
            <person name="Adhya S."/>
        </authorList>
    </citation>
    <scope>NUCLEOTIDE SEQUENCE [GENOMIC DNA] OF 175-385</scope>
    <source>
        <strain>K12 / C600 / CR34 / ATCC 23724 / DSM 3925 / LMG 3041 / NCIB 10222</strain>
    </source>
</reference>
<dbReference type="EMBL" id="U00007">
    <property type="protein sequence ID" value="AAA60506.1"/>
    <property type="molecule type" value="Genomic_DNA"/>
</dbReference>
<dbReference type="EMBL" id="U00096">
    <property type="protein sequence ID" value="AAC75213.1"/>
    <property type="molecule type" value="Genomic_DNA"/>
</dbReference>
<dbReference type="EMBL" id="AP009048">
    <property type="protein sequence ID" value="BAE76629.1"/>
    <property type="molecule type" value="Genomic_DNA"/>
</dbReference>
<dbReference type="EMBL" id="X62529">
    <property type="protein sequence ID" value="CAA44389.1"/>
    <property type="molecule type" value="Genomic_DNA"/>
</dbReference>
<dbReference type="PIR" id="G64983">
    <property type="entry name" value="G64983"/>
</dbReference>
<dbReference type="RefSeq" id="NP_416657.1">
    <property type="nucleotide sequence ID" value="NC_000913.3"/>
</dbReference>
<dbReference type="RefSeq" id="WP_000440926.1">
    <property type="nucleotide sequence ID" value="NZ_JACEFS010000032.1"/>
</dbReference>
<dbReference type="BioGRID" id="4262226">
    <property type="interactions" value="127"/>
</dbReference>
<dbReference type="FunCoup" id="P25747">
    <property type="interactions" value="39"/>
</dbReference>
<dbReference type="STRING" id="511145.b2152"/>
<dbReference type="TCDB" id="9.B.169.1.2">
    <property type="family name" value="the integral membrane protein (8 -10 tmss) yeib or duf418 (yeib) family"/>
</dbReference>
<dbReference type="PaxDb" id="511145-b2152"/>
<dbReference type="EnsemblBacteria" id="AAC75213">
    <property type="protein sequence ID" value="AAC75213"/>
    <property type="gene ID" value="b2152"/>
</dbReference>
<dbReference type="GeneID" id="949044"/>
<dbReference type="KEGG" id="ecj:JW2139"/>
<dbReference type="KEGG" id="eco:b2152"/>
<dbReference type="KEGG" id="ecoc:C3026_12060"/>
<dbReference type="PATRIC" id="fig|1411691.4.peg.89"/>
<dbReference type="EchoBASE" id="EB1267"/>
<dbReference type="eggNOG" id="COG2311">
    <property type="taxonomic scope" value="Bacteria"/>
</dbReference>
<dbReference type="HOGENOM" id="CLU_039610_2_0_6"/>
<dbReference type="InParanoid" id="P25747"/>
<dbReference type="OMA" id="IFFMNIY"/>
<dbReference type="OrthoDB" id="9807744at2"/>
<dbReference type="PhylomeDB" id="P25747"/>
<dbReference type="BioCyc" id="EcoCyc:EG11290-MONOMER"/>
<dbReference type="PRO" id="PR:P25747"/>
<dbReference type="Proteomes" id="UP000000625">
    <property type="component" value="Chromosome"/>
</dbReference>
<dbReference type="GO" id="GO:0005886">
    <property type="term" value="C:plasma membrane"/>
    <property type="evidence" value="ECO:0000314"/>
    <property type="project" value="EcoCyc"/>
</dbReference>
<dbReference type="InterPro" id="IPR052529">
    <property type="entry name" value="Bact_Transport_Assoc"/>
</dbReference>
<dbReference type="InterPro" id="IPR007349">
    <property type="entry name" value="DUF418"/>
</dbReference>
<dbReference type="NCBIfam" id="NF008093">
    <property type="entry name" value="PRK10835.1"/>
    <property type="match status" value="1"/>
</dbReference>
<dbReference type="PANTHER" id="PTHR30590">
    <property type="entry name" value="INNER MEMBRANE PROTEIN"/>
    <property type="match status" value="1"/>
</dbReference>
<dbReference type="PANTHER" id="PTHR30590:SF2">
    <property type="entry name" value="INNER MEMBRANE PROTEIN"/>
    <property type="match status" value="1"/>
</dbReference>
<dbReference type="Pfam" id="PF04235">
    <property type="entry name" value="DUF418"/>
    <property type="match status" value="1"/>
</dbReference>
<feature type="chain" id="PRO_0000169149" description="Uncharacterized protein YeiB">
    <location>
        <begin position="1"/>
        <end position="385"/>
    </location>
</feature>
<feature type="transmembrane region" description="Helical" evidence="1">
    <location>
        <begin position="12"/>
        <end position="32"/>
    </location>
</feature>
<feature type="transmembrane region" description="Helical" evidence="1">
    <location>
        <begin position="50"/>
        <end position="70"/>
    </location>
</feature>
<feature type="transmembrane region" description="Helical" evidence="1">
    <location>
        <begin position="90"/>
        <end position="110"/>
    </location>
</feature>
<feature type="transmembrane region" description="Helical" evidence="1">
    <location>
        <begin position="132"/>
        <end position="152"/>
    </location>
</feature>
<feature type="transmembrane region" description="Helical" evidence="1">
    <location>
        <begin position="195"/>
        <end position="215"/>
    </location>
</feature>
<feature type="transmembrane region" description="Helical" evidence="1">
    <location>
        <begin position="233"/>
        <end position="253"/>
    </location>
</feature>
<feature type="transmembrane region" description="Helical" evidence="1">
    <location>
        <begin position="272"/>
        <end position="292"/>
    </location>
</feature>
<feature type="transmembrane region" description="Helical" evidence="1">
    <location>
        <begin position="312"/>
        <end position="332"/>
    </location>
</feature>
<feature type="transmembrane region" description="Helical" evidence="1">
    <location>
        <begin position="335"/>
        <end position="355"/>
    </location>
</feature>
<feature type="sequence conflict" description="In Ref. 4; CAA44389." evidence="2" ref="4">
    <original>R</original>
    <variation>P</variation>
    <location>
        <position position="217"/>
    </location>
</feature>
<feature type="sequence conflict" description="In Ref. 4." evidence="2" ref="4">
    <original>PVEWLWRQLTLRAAGPAISKTS</original>
    <variation>RWNGSGV</variation>
    <location>
        <begin position="363"/>
        <end position="384"/>
    </location>
</feature>
<evidence type="ECO:0000255" key="1"/>
<evidence type="ECO:0000305" key="2"/>
<name>YEIB_ECOLI</name>
<gene>
    <name type="primary">yeiB</name>
    <name type="ordered locus">b2152</name>
    <name type="ordered locus">JW2139</name>
</gene>